<sequence length="619" mass="68613">MSGLVLGQRDEPAGHRLSQEEILGSTKVVSQGLEALHSEHQAVLQSLSHTIECLQQGGHEEGLVHEKARQLRRSMENIELGLSEAQVMLALASHLSTVESEKQKLRAQVRRLCQENQWLRDELAGTQQRLQRSEQAVAQLEEEKKHLEFLRQLRQYDEDGHGMEEKEGEATKDSLDDLFPNEEEEDSGNDLSRGQGAAAAQQGGYEIPARLRTLHNLVIQYAAQGRYEVAVPLCKQALEDLERTSGRGHPDVATMLNILALVYRDQNKYKEAAHLLNDALSIRESTLGRDHPAVAATLNNLAVLYGKRGKYKEAEPLCQRALEIREKVLGTDHPDVAKQLNNLALLCQNQGKYEAVERYYQRALAIYESQLGPDNPNVARTKNNLASCYLKQGKYSEAEALYKEILTCAHVQEFGSVDDDHKPIWMHAEEREEMSRSRPRDSSAPYAEYGGWYKACRVSSPTVNTTLKNLGALYRRQGKLEAAETLEECALRSRKQGTDPISQTKVAELLGEGDGRKAIQEGPGDSVKFEGGEDASVAVEWSGDGSGTLQRSGSLGKIRDVLRRSSELLVRKLQGTEPRPSSSSMKRAASLNYLNQPNAAPLQVSRGLSASTVDLSSSS</sequence>
<feature type="initiator methionine" description="Removed" evidence="3">
    <location>
        <position position="1"/>
    </location>
</feature>
<feature type="chain" id="PRO_0000215098" description="Kinesin light chain 4">
    <location>
        <begin position="2"/>
        <end position="619"/>
    </location>
</feature>
<feature type="repeat" description="TPR 1">
    <location>
        <begin position="55"/>
        <end position="88"/>
    </location>
</feature>
<feature type="repeat" description="TPR 2">
    <location>
        <begin position="211"/>
        <end position="244"/>
    </location>
</feature>
<feature type="repeat" description="TPR 3">
    <location>
        <begin position="253"/>
        <end position="286"/>
    </location>
</feature>
<feature type="repeat" description="TPR 4">
    <location>
        <begin position="295"/>
        <end position="328"/>
    </location>
</feature>
<feature type="repeat" description="TPR 5">
    <location>
        <begin position="337"/>
        <end position="370"/>
    </location>
</feature>
<feature type="repeat" description="TPR 6">
    <location>
        <begin position="379"/>
        <end position="412"/>
    </location>
</feature>
<feature type="repeat" description="TPR 7">
    <location>
        <begin position="464"/>
        <end position="497"/>
    </location>
</feature>
<feature type="region of interest" description="Disordered" evidence="5">
    <location>
        <begin position="156"/>
        <end position="199"/>
    </location>
</feature>
<feature type="region of interest" description="Disordered" evidence="5">
    <location>
        <begin position="571"/>
        <end position="619"/>
    </location>
</feature>
<feature type="coiled-coil region" evidence="4">
    <location>
        <begin position="65"/>
        <end position="155"/>
    </location>
</feature>
<feature type="compositionally biased region" description="Basic and acidic residues" evidence="5">
    <location>
        <begin position="156"/>
        <end position="175"/>
    </location>
</feature>
<feature type="compositionally biased region" description="Acidic residues" evidence="5">
    <location>
        <begin position="179"/>
        <end position="188"/>
    </location>
</feature>
<feature type="compositionally biased region" description="Low complexity" evidence="5">
    <location>
        <begin position="609"/>
        <end position="619"/>
    </location>
</feature>
<feature type="modified residue" description="N-acetylserine" evidence="3">
    <location>
        <position position="2"/>
    </location>
</feature>
<feature type="modified residue" description="Phosphoserine" evidence="10">
    <location>
        <position position="174"/>
    </location>
</feature>
<feature type="modified residue" description="Phosphoserine" evidence="3">
    <location>
        <position position="460"/>
    </location>
</feature>
<feature type="modified residue" description="Phosphoserine" evidence="2">
    <location>
        <position position="565"/>
    </location>
</feature>
<feature type="modified residue" description="Phosphoserine" evidence="10">
    <location>
        <position position="566"/>
    </location>
</feature>
<feature type="modified residue" description="Phosphoserine" evidence="7 8 9 10">
    <location>
        <position position="590"/>
    </location>
</feature>
<feature type="modified residue" description="Phosphothreonine" evidence="3">
    <location>
        <position position="612"/>
    </location>
</feature>
<accession>Q9DBS5</accession>
<accession>Q3TCC5</accession>
<name>KLC4_MOUSE</name>
<gene>
    <name type="primary">Klc4</name>
    <name type="synonym">Knsl8</name>
</gene>
<organism>
    <name type="scientific">Mus musculus</name>
    <name type="common">Mouse</name>
    <dbReference type="NCBI Taxonomy" id="10090"/>
    <lineage>
        <taxon>Eukaryota</taxon>
        <taxon>Metazoa</taxon>
        <taxon>Chordata</taxon>
        <taxon>Craniata</taxon>
        <taxon>Vertebrata</taxon>
        <taxon>Euteleostomi</taxon>
        <taxon>Mammalia</taxon>
        <taxon>Eutheria</taxon>
        <taxon>Euarchontoglires</taxon>
        <taxon>Glires</taxon>
        <taxon>Rodentia</taxon>
        <taxon>Myomorpha</taxon>
        <taxon>Muroidea</taxon>
        <taxon>Muridae</taxon>
        <taxon>Murinae</taxon>
        <taxon>Mus</taxon>
        <taxon>Mus</taxon>
    </lineage>
</organism>
<dbReference type="EMBL" id="AK004774">
    <property type="protein sequence ID" value="BAB23552.1"/>
    <property type="molecule type" value="mRNA"/>
</dbReference>
<dbReference type="EMBL" id="AK170793">
    <property type="protein sequence ID" value="BAE42032.1"/>
    <property type="molecule type" value="mRNA"/>
</dbReference>
<dbReference type="CCDS" id="CCDS28832.1"/>
<dbReference type="RefSeq" id="NP_001344059.1">
    <property type="nucleotide sequence ID" value="NM_001357130.2"/>
</dbReference>
<dbReference type="RefSeq" id="NP_001419513.1">
    <property type="nucleotide sequence ID" value="NM_001432584.1"/>
</dbReference>
<dbReference type="RefSeq" id="NP_001419514.1">
    <property type="nucleotide sequence ID" value="NM_001432585.1"/>
</dbReference>
<dbReference type="RefSeq" id="NP_083367.1">
    <property type="nucleotide sequence ID" value="NM_029091.4"/>
</dbReference>
<dbReference type="RefSeq" id="XP_006525106.1">
    <property type="nucleotide sequence ID" value="XM_006525043.2"/>
</dbReference>
<dbReference type="RefSeq" id="XP_011244990.1">
    <property type="nucleotide sequence ID" value="XM_011246688.2"/>
</dbReference>
<dbReference type="RefSeq" id="XP_011244991.1">
    <property type="nucleotide sequence ID" value="XM_011246689.1"/>
</dbReference>
<dbReference type="SMR" id="Q9DBS5"/>
<dbReference type="BioGRID" id="217004">
    <property type="interactions" value="29"/>
</dbReference>
<dbReference type="DIP" id="DIP-48704N"/>
<dbReference type="FunCoup" id="Q9DBS5">
    <property type="interactions" value="1151"/>
</dbReference>
<dbReference type="IntAct" id="Q9DBS5">
    <property type="interactions" value="8"/>
</dbReference>
<dbReference type="STRING" id="10090.ENSMUSP00000003642"/>
<dbReference type="iPTMnet" id="Q9DBS5"/>
<dbReference type="PhosphoSitePlus" id="Q9DBS5"/>
<dbReference type="SwissPalm" id="Q9DBS5"/>
<dbReference type="jPOST" id="Q9DBS5"/>
<dbReference type="PaxDb" id="10090-ENSMUSP00000003642"/>
<dbReference type="PeptideAtlas" id="Q9DBS5"/>
<dbReference type="ProteomicsDB" id="263615"/>
<dbReference type="Pumba" id="Q9DBS5"/>
<dbReference type="Antibodypedia" id="30259">
    <property type="antibodies" value="70 antibodies from 17 providers"/>
</dbReference>
<dbReference type="DNASU" id="74764"/>
<dbReference type="Ensembl" id="ENSMUST00000003642.7">
    <property type="protein sequence ID" value="ENSMUSP00000003642.7"/>
    <property type="gene ID" value="ENSMUSG00000003546.11"/>
</dbReference>
<dbReference type="Ensembl" id="ENSMUST00000233974.2">
    <property type="protein sequence ID" value="ENSMUSP00000156564.2"/>
    <property type="gene ID" value="ENSMUSG00000003546.11"/>
</dbReference>
<dbReference type="GeneID" id="74764"/>
<dbReference type="KEGG" id="mmu:74764"/>
<dbReference type="UCSC" id="uc008ctj.1">
    <property type="organism name" value="mouse"/>
</dbReference>
<dbReference type="AGR" id="MGI:1922014"/>
<dbReference type="CTD" id="89953"/>
<dbReference type="MGI" id="MGI:1922014">
    <property type="gene designation" value="Klc4"/>
</dbReference>
<dbReference type="VEuPathDB" id="HostDB:ENSMUSG00000003546"/>
<dbReference type="eggNOG" id="KOG1840">
    <property type="taxonomic scope" value="Eukaryota"/>
</dbReference>
<dbReference type="GeneTree" id="ENSGT00940000161323"/>
<dbReference type="HOGENOM" id="CLU_019953_0_0_1"/>
<dbReference type="InParanoid" id="Q9DBS5"/>
<dbReference type="OMA" id="LQHEGHE"/>
<dbReference type="OrthoDB" id="413723at2759"/>
<dbReference type="PhylomeDB" id="Q9DBS5"/>
<dbReference type="TreeFam" id="TF314010"/>
<dbReference type="Reactome" id="R-MMU-2132295">
    <property type="pathway name" value="MHC class II antigen presentation"/>
</dbReference>
<dbReference type="Reactome" id="R-MMU-5625970">
    <property type="pathway name" value="RHO GTPases activate KTN1"/>
</dbReference>
<dbReference type="Reactome" id="R-MMU-6811434">
    <property type="pathway name" value="COPI-dependent Golgi-to-ER retrograde traffic"/>
</dbReference>
<dbReference type="Reactome" id="R-MMU-983189">
    <property type="pathway name" value="Kinesins"/>
</dbReference>
<dbReference type="BioGRID-ORCS" id="74764">
    <property type="hits" value="4 hits in 78 CRISPR screens"/>
</dbReference>
<dbReference type="ChiTaRS" id="Klc4">
    <property type="organism name" value="mouse"/>
</dbReference>
<dbReference type="PRO" id="PR:Q9DBS5"/>
<dbReference type="Proteomes" id="UP000000589">
    <property type="component" value="Chromosome 17"/>
</dbReference>
<dbReference type="RNAct" id="Q9DBS5">
    <property type="molecule type" value="protein"/>
</dbReference>
<dbReference type="Bgee" id="ENSMUSG00000003546">
    <property type="expression patterns" value="Expressed in small intestine Peyer's patch and 259 other cell types or tissues"/>
</dbReference>
<dbReference type="GO" id="GO:0005737">
    <property type="term" value="C:cytoplasm"/>
    <property type="evidence" value="ECO:0007669"/>
    <property type="project" value="UniProtKB-KW"/>
</dbReference>
<dbReference type="GO" id="GO:0005871">
    <property type="term" value="C:kinesin complex"/>
    <property type="evidence" value="ECO:0007669"/>
    <property type="project" value="InterPro"/>
</dbReference>
<dbReference type="GO" id="GO:0005874">
    <property type="term" value="C:microtubule"/>
    <property type="evidence" value="ECO:0007669"/>
    <property type="project" value="UniProtKB-KW"/>
</dbReference>
<dbReference type="FunFam" id="1.25.40.10:FF:000003">
    <property type="entry name" value="kinesin light chain isoform X1"/>
    <property type="match status" value="1"/>
</dbReference>
<dbReference type="Gene3D" id="1.25.40.10">
    <property type="entry name" value="Tetratricopeptide repeat domain"/>
    <property type="match status" value="1"/>
</dbReference>
<dbReference type="InterPro" id="IPR002151">
    <property type="entry name" value="Kinesin_light"/>
</dbReference>
<dbReference type="InterPro" id="IPR015792">
    <property type="entry name" value="Kinesin_light_repeat"/>
</dbReference>
<dbReference type="InterPro" id="IPR011990">
    <property type="entry name" value="TPR-like_helical_dom_sf"/>
</dbReference>
<dbReference type="InterPro" id="IPR019734">
    <property type="entry name" value="TPR_rpt"/>
</dbReference>
<dbReference type="PANTHER" id="PTHR45783">
    <property type="entry name" value="KINESIN LIGHT CHAIN"/>
    <property type="match status" value="1"/>
</dbReference>
<dbReference type="PANTHER" id="PTHR45783:SF6">
    <property type="entry name" value="KINESIN LIGHT CHAIN 4"/>
    <property type="match status" value="1"/>
</dbReference>
<dbReference type="Pfam" id="PF13374">
    <property type="entry name" value="TPR_10"/>
    <property type="match status" value="2"/>
</dbReference>
<dbReference type="Pfam" id="PF13424">
    <property type="entry name" value="TPR_12"/>
    <property type="match status" value="2"/>
</dbReference>
<dbReference type="PRINTS" id="PR00381">
    <property type="entry name" value="KINESINLIGHT"/>
</dbReference>
<dbReference type="SMART" id="SM00028">
    <property type="entry name" value="TPR"/>
    <property type="match status" value="5"/>
</dbReference>
<dbReference type="SUPFAM" id="SSF48452">
    <property type="entry name" value="TPR-like"/>
    <property type="match status" value="2"/>
</dbReference>
<dbReference type="PROSITE" id="PS01160">
    <property type="entry name" value="KINESIN_LIGHT"/>
    <property type="match status" value="3"/>
</dbReference>
<dbReference type="PROSITE" id="PS50005">
    <property type="entry name" value="TPR"/>
    <property type="match status" value="6"/>
</dbReference>
<dbReference type="PROSITE" id="PS50293">
    <property type="entry name" value="TPR_REGION"/>
    <property type="match status" value="2"/>
</dbReference>
<proteinExistence type="evidence at protein level"/>
<protein>
    <recommendedName>
        <fullName>Kinesin light chain 4</fullName>
        <shortName>KLC 4</shortName>
    </recommendedName>
    <alternativeName>
        <fullName>Kinesin-like protein 8</fullName>
    </alternativeName>
</protein>
<comment type="function">
    <text evidence="1">Kinesin is a microtubule-associated force-producing protein that may play a role in organelle transport. The light chain may function in coupling of cargo to the heavy chain or in the modulation of its ATPase activity (By similarity).</text>
</comment>
<comment type="subunit">
    <text evidence="1">Oligomeric complex composed of two heavy chains and two light chains.</text>
</comment>
<comment type="subcellular location">
    <subcellularLocation>
        <location evidence="6">Cytoplasm</location>
        <location evidence="6">Cytoskeleton</location>
    </subcellularLocation>
</comment>
<comment type="similarity">
    <text evidence="6">Belongs to the kinesin light chain family.</text>
</comment>
<reference key="1">
    <citation type="journal article" date="2005" name="Science">
        <title>The transcriptional landscape of the mammalian genome.</title>
        <authorList>
            <person name="Carninci P."/>
            <person name="Kasukawa T."/>
            <person name="Katayama S."/>
            <person name="Gough J."/>
            <person name="Frith M.C."/>
            <person name="Maeda N."/>
            <person name="Oyama R."/>
            <person name="Ravasi T."/>
            <person name="Lenhard B."/>
            <person name="Wells C."/>
            <person name="Kodzius R."/>
            <person name="Shimokawa K."/>
            <person name="Bajic V.B."/>
            <person name="Brenner S.E."/>
            <person name="Batalov S."/>
            <person name="Forrest A.R."/>
            <person name="Zavolan M."/>
            <person name="Davis M.J."/>
            <person name="Wilming L.G."/>
            <person name="Aidinis V."/>
            <person name="Allen J.E."/>
            <person name="Ambesi-Impiombato A."/>
            <person name="Apweiler R."/>
            <person name="Aturaliya R.N."/>
            <person name="Bailey T.L."/>
            <person name="Bansal M."/>
            <person name="Baxter L."/>
            <person name="Beisel K.W."/>
            <person name="Bersano T."/>
            <person name="Bono H."/>
            <person name="Chalk A.M."/>
            <person name="Chiu K.P."/>
            <person name="Choudhary V."/>
            <person name="Christoffels A."/>
            <person name="Clutterbuck D.R."/>
            <person name="Crowe M.L."/>
            <person name="Dalla E."/>
            <person name="Dalrymple B.P."/>
            <person name="de Bono B."/>
            <person name="Della Gatta G."/>
            <person name="di Bernardo D."/>
            <person name="Down T."/>
            <person name="Engstrom P."/>
            <person name="Fagiolini M."/>
            <person name="Faulkner G."/>
            <person name="Fletcher C.F."/>
            <person name="Fukushima T."/>
            <person name="Furuno M."/>
            <person name="Futaki S."/>
            <person name="Gariboldi M."/>
            <person name="Georgii-Hemming P."/>
            <person name="Gingeras T.R."/>
            <person name="Gojobori T."/>
            <person name="Green R.E."/>
            <person name="Gustincich S."/>
            <person name="Harbers M."/>
            <person name="Hayashi Y."/>
            <person name="Hensch T.K."/>
            <person name="Hirokawa N."/>
            <person name="Hill D."/>
            <person name="Huminiecki L."/>
            <person name="Iacono M."/>
            <person name="Ikeo K."/>
            <person name="Iwama A."/>
            <person name="Ishikawa T."/>
            <person name="Jakt M."/>
            <person name="Kanapin A."/>
            <person name="Katoh M."/>
            <person name="Kawasawa Y."/>
            <person name="Kelso J."/>
            <person name="Kitamura H."/>
            <person name="Kitano H."/>
            <person name="Kollias G."/>
            <person name="Krishnan S.P."/>
            <person name="Kruger A."/>
            <person name="Kummerfeld S.K."/>
            <person name="Kurochkin I.V."/>
            <person name="Lareau L.F."/>
            <person name="Lazarevic D."/>
            <person name="Lipovich L."/>
            <person name="Liu J."/>
            <person name="Liuni S."/>
            <person name="McWilliam S."/>
            <person name="Madan Babu M."/>
            <person name="Madera M."/>
            <person name="Marchionni L."/>
            <person name="Matsuda H."/>
            <person name="Matsuzawa S."/>
            <person name="Miki H."/>
            <person name="Mignone F."/>
            <person name="Miyake S."/>
            <person name="Morris K."/>
            <person name="Mottagui-Tabar S."/>
            <person name="Mulder N."/>
            <person name="Nakano N."/>
            <person name="Nakauchi H."/>
            <person name="Ng P."/>
            <person name="Nilsson R."/>
            <person name="Nishiguchi S."/>
            <person name="Nishikawa S."/>
            <person name="Nori F."/>
            <person name="Ohara O."/>
            <person name="Okazaki Y."/>
            <person name="Orlando V."/>
            <person name="Pang K.C."/>
            <person name="Pavan W.J."/>
            <person name="Pavesi G."/>
            <person name="Pesole G."/>
            <person name="Petrovsky N."/>
            <person name="Piazza S."/>
            <person name="Reed J."/>
            <person name="Reid J.F."/>
            <person name="Ring B.Z."/>
            <person name="Ringwald M."/>
            <person name="Rost B."/>
            <person name="Ruan Y."/>
            <person name="Salzberg S.L."/>
            <person name="Sandelin A."/>
            <person name="Schneider C."/>
            <person name="Schoenbach C."/>
            <person name="Sekiguchi K."/>
            <person name="Semple C.A."/>
            <person name="Seno S."/>
            <person name="Sessa L."/>
            <person name="Sheng Y."/>
            <person name="Shibata Y."/>
            <person name="Shimada H."/>
            <person name="Shimada K."/>
            <person name="Silva D."/>
            <person name="Sinclair B."/>
            <person name="Sperling S."/>
            <person name="Stupka E."/>
            <person name="Sugiura K."/>
            <person name="Sultana R."/>
            <person name="Takenaka Y."/>
            <person name="Taki K."/>
            <person name="Tammoja K."/>
            <person name="Tan S.L."/>
            <person name="Tang S."/>
            <person name="Taylor M.S."/>
            <person name="Tegner J."/>
            <person name="Teichmann S.A."/>
            <person name="Ueda H.R."/>
            <person name="van Nimwegen E."/>
            <person name="Verardo R."/>
            <person name="Wei C.L."/>
            <person name="Yagi K."/>
            <person name="Yamanishi H."/>
            <person name="Zabarovsky E."/>
            <person name="Zhu S."/>
            <person name="Zimmer A."/>
            <person name="Hide W."/>
            <person name="Bult C."/>
            <person name="Grimmond S.M."/>
            <person name="Teasdale R.D."/>
            <person name="Liu E.T."/>
            <person name="Brusic V."/>
            <person name="Quackenbush J."/>
            <person name="Wahlestedt C."/>
            <person name="Mattick J.S."/>
            <person name="Hume D.A."/>
            <person name="Kai C."/>
            <person name="Sasaki D."/>
            <person name="Tomaru Y."/>
            <person name="Fukuda S."/>
            <person name="Kanamori-Katayama M."/>
            <person name="Suzuki M."/>
            <person name="Aoki J."/>
            <person name="Arakawa T."/>
            <person name="Iida J."/>
            <person name="Imamura K."/>
            <person name="Itoh M."/>
            <person name="Kato T."/>
            <person name="Kawaji H."/>
            <person name="Kawagashira N."/>
            <person name="Kawashima T."/>
            <person name="Kojima M."/>
            <person name="Kondo S."/>
            <person name="Konno H."/>
            <person name="Nakano K."/>
            <person name="Ninomiya N."/>
            <person name="Nishio T."/>
            <person name="Okada M."/>
            <person name="Plessy C."/>
            <person name="Shibata K."/>
            <person name="Shiraki T."/>
            <person name="Suzuki S."/>
            <person name="Tagami M."/>
            <person name="Waki K."/>
            <person name="Watahiki A."/>
            <person name="Okamura-Oho Y."/>
            <person name="Suzuki H."/>
            <person name="Kawai J."/>
            <person name="Hayashizaki Y."/>
        </authorList>
    </citation>
    <scope>NUCLEOTIDE SEQUENCE [LARGE SCALE MRNA]</scope>
    <source>
        <strain>C57BL/6J</strain>
        <strain>NOD</strain>
        <tissue>Lung</tissue>
    </source>
</reference>
<reference key="2">
    <citation type="journal article" date="2004" name="Mol. Cell. Proteomics">
        <title>Phosphoproteomic analysis of the developing mouse brain.</title>
        <authorList>
            <person name="Ballif B.A."/>
            <person name="Villen J."/>
            <person name="Beausoleil S.A."/>
            <person name="Schwartz D."/>
            <person name="Gygi S.P."/>
        </authorList>
    </citation>
    <scope>PHOSPHORYLATION [LARGE SCALE ANALYSIS] AT SER-590</scope>
    <scope>IDENTIFICATION BY MASS SPECTROMETRY [LARGE SCALE ANALYSIS]</scope>
    <source>
        <tissue>Embryonic brain</tissue>
    </source>
</reference>
<reference key="3">
    <citation type="journal article" date="2007" name="Proc. Natl. Acad. Sci. U.S.A.">
        <title>Large-scale phosphorylation analysis of mouse liver.</title>
        <authorList>
            <person name="Villen J."/>
            <person name="Beausoleil S.A."/>
            <person name="Gerber S.A."/>
            <person name="Gygi S.P."/>
        </authorList>
    </citation>
    <scope>PHOSPHORYLATION [LARGE SCALE ANALYSIS] AT SER-590</scope>
    <scope>IDENTIFICATION BY MASS SPECTROMETRY [LARGE SCALE ANALYSIS]</scope>
    <source>
        <tissue>Liver</tissue>
    </source>
</reference>
<reference key="4">
    <citation type="journal article" date="2008" name="J. Proteome Res.">
        <title>Specific phosphopeptide enrichment with immobilized titanium ion affinity chromatography adsorbent for phosphoproteome analysis.</title>
        <authorList>
            <person name="Zhou H."/>
            <person name="Ye M."/>
            <person name="Dong J."/>
            <person name="Han G."/>
            <person name="Jiang X."/>
            <person name="Wu R."/>
            <person name="Zou H."/>
        </authorList>
    </citation>
    <scope>PHOSPHORYLATION [LARGE SCALE ANALYSIS] AT SER-590</scope>
    <scope>IDENTIFICATION BY MASS SPECTROMETRY [LARGE SCALE ANALYSIS]</scope>
    <source>
        <tissue>Liver</tissue>
    </source>
</reference>
<reference key="5">
    <citation type="journal article" date="2010" name="Cell">
        <title>A tissue-specific atlas of mouse protein phosphorylation and expression.</title>
        <authorList>
            <person name="Huttlin E.L."/>
            <person name="Jedrychowski M.P."/>
            <person name="Elias J.E."/>
            <person name="Goswami T."/>
            <person name="Rad R."/>
            <person name="Beausoleil S.A."/>
            <person name="Villen J."/>
            <person name="Haas W."/>
            <person name="Sowa M.E."/>
            <person name="Gygi S.P."/>
        </authorList>
    </citation>
    <scope>PHOSPHORYLATION [LARGE SCALE ANALYSIS] AT SER-174; SER-566 AND SER-590</scope>
    <scope>IDENTIFICATION BY MASS SPECTROMETRY [LARGE SCALE ANALYSIS]</scope>
    <source>
        <tissue>Brain</tissue>
        <tissue>Brown adipose tissue</tissue>
        <tissue>Heart</tissue>
        <tissue>Kidney</tissue>
        <tissue>Liver</tissue>
        <tissue>Lung</tissue>
        <tissue>Pancreas</tissue>
        <tissue>Spleen</tissue>
        <tissue>Testis</tissue>
    </source>
</reference>
<keyword id="KW-0007">Acetylation</keyword>
<keyword id="KW-0175">Coiled coil</keyword>
<keyword id="KW-0963">Cytoplasm</keyword>
<keyword id="KW-0206">Cytoskeleton</keyword>
<keyword id="KW-0493">Microtubule</keyword>
<keyword id="KW-0505">Motor protein</keyword>
<keyword id="KW-0597">Phosphoprotein</keyword>
<keyword id="KW-1185">Reference proteome</keyword>
<keyword id="KW-0677">Repeat</keyword>
<keyword id="KW-0802">TPR repeat</keyword>
<evidence type="ECO:0000250" key="1"/>
<evidence type="ECO:0000250" key="2">
    <source>
        <dbReference type="UniProtKB" id="Q5PQM2"/>
    </source>
</evidence>
<evidence type="ECO:0000250" key="3">
    <source>
        <dbReference type="UniProtKB" id="Q9NSK0"/>
    </source>
</evidence>
<evidence type="ECO:0000255" key="4"/>
<evidence type="ECO:0000256" key="5">
    <source>
        <dbReference type="SAM" id="MobiDB-lite"/>
    </source>
</evidence>
<evidence type="ECO:0000305" key="6"/>
<evidence type="ECO:0007744" key="7">
    <source>
    </source>
</evidence>
<evidence type="ECO:0007744" key="8">
    <source>
    </source>
</evidence>
<evidence type="ECO:0007744" key="9">
    <source>
    </source>
</evidence>
<evidence type="ECO:0007744" key="10">
    <source>
    </source>
</evidence>